<proteinExistence type="inferred from homology"/>
<name>CYOE_VESOH</name>
<protein>
    <recommendedName>
        <fullName evidence="1">Protoheme IX farnesyltransferase</fullName>
        <ecNumber evidence="1">2.5.1.141</ecNumber>
    </recommendedName>
    <alternativeName>
        <fullName evidence="1">Heme B farnesyltransferase</fullName>
    </alternativeName>
    <alternativeName>
        <fullName evidence="1">Heme O synthase</fullName>
    </alternativeName>
</protein>
<gene>
    <name evidence="1" type="primary">cyoE</name>
    <name type="ordered locus">COSY_0030</name>
</gene>
<reference key="1">
    <citation type="journal article" date="2007" name="Curr. Biol.">
        <title>Reduced genome of the thioautotrophic intracellular symbiont in a deep-sea clam, Calyptogena okutanii.</title>
        <authorList>
            <person name="Kuwahara H."/>
            <person name="Yoshida T."/>
            <person name="Takaki Y."/>
            <person name="Shimamura S."/>
            <person name="Nishi S."/>
            <person name="Harada M."/>
            <person name="Matsuyama K."/>
            <person name="Takishita K."/>
            <person name="Kawato M."/>
            <person name="Uematsu K."/>
            <person name="Fujiwara Y."/>
            <person name="Sato T."/>
            <person name="Kato C."/>
            <person name="Kitagawa M."/>
            <person name="Kato I."/>
            <person name="Maruyama T."/>
        </authorList>
    </citation>
    <scope>NUCLEOTIDE SEQUENCE [LARGE SCALE GENOMIC DNA]</scope>
    <source>
        <strain>HA</strain>
    </source>
</reference>
<dbReference type="EC" id="2.5.1.141" evidence="1"/>
<dbReference type="EMBL" id="AP009247">
    <property type="protein sequence ID" value="BAF61169.1"/>
    <property type="molecule type" value="Genomic_DNA"/>
</dbReference>
<dbReference type="RefSeq" id="WP_011929439.1">
    <property type="nucleotide sequence ID" value="NC_009465.1"/>
</dbReference>
<dbReference type="SMR" id="A5CXZ0"/>
<dbReference type="STRING" id="412965.COSY_0030"/>
<dbReference type="KEGG" id="vok:COSY_0030"/>
<dbReference type="eggNOG" id="COG0109">
    <property type="taxonomic scope" value="Bacteria"/>
</dbReference>
<dbReference type="HOGENOM" id="CLU_029631_0_2_6"/>
<dbReference type="OrthoDB" id="9814417at2"/>
<dbReference type="UniPathway" id="UPA00834">
    <property type="reaction ID" value="UER00712"/>
</dbReference>
<dbReference type="Proteomes" id="UP000000247">
    <property type="component" value="Chromosome"/>
</dbReference>
<dbReference type="GO" id="GO:0005886">
    <property type="term" value="C:plasma membrane"/>
    <property type="evidence" value="ECO:0007669"/>
    <property type="project" value="UniProtKB-SubCell"/>
</dbReference>
<dbReference type="GO" id="GO:0008495">
    <property type="term" value="F:protoheme IX farnesyltransferase activity"/>
    <property type="evidence" value="ECO:0007669"/>
    <property type="project" value="UniProtKB-UniRule"/>
</dbReference>
<dbReference type="GO" id="GO:0048034">
    <property type="term" value="P:heme O biosynthetic process"/>
    <property type="evidence" value="ECO:0007669"/>
    <property type="project" value="UniProtKB-UniRule"/>
</dbReference>
<dbReference type="CDD" id="cd13957">
    <property type="entry name" value="PT_UbiA_Cox10"/>
    <property type="match status" value="1"/>
</dbReference>
<dbReference type="FunFam" id="1.10.357.140:FF:000001">
    <property type="entry name" value="Protoheme IX farnesyltransferase"/>
    <property type="match status" value="1"/>
</dbReference>
<dbReference type="Gene3D" id="1.10.357.140">
    <property type="entry name" value="UbiA prenyltransferase"/>
    <property type="match status" value="1"/>
</dbReference>
<dbReference type="HAMAP" id="MF_00154">
    <property type="entry name" value="CyoE_CtaB"/>
    <property type="match status" value="1"/>
</dbReference>
<dbReference type="InterPro" id="IPR006369">
    <property type="entry name" value="Protohaem_IX_farnesylTrfase"/>
</dbReference>
<dbReference type="InterPro" id="IPR000537">
    <property type="entry name" value="UbiA_prenyltransferase"/>
</dbReference>
<dbReference type="InterPro" id="IPR030470">
    <property type="entry name" value="UbiA_prenylTrfase_CS"/>
</dbReference>
<dbReference type="InterPro" id="IPR044878">
    <property type="entry name" value="UbiA_sf"/>
</dbReference>
<dbReference type="NCBIfam" id="TIGR01473">
    <property type="entry name" value="cyoE_ctaB"/>
    <property type="match status" value="1"/>
</dbReference>
<dbReference type="NCBIfam" id="NF003349">
    <property type="entry name" value="PRK04375.1-2"/>
    <property type="match status" value="1"/>
</dbReference>
<dbReference type="PANTHER" id="PTHR43448:SF7">
    <property type="entry name" value="4-HYDROXYBENZOATE SOLANESYLTRANSFERASE"/>
    <property type="match status" value="1"/>
</dbReference>
<dbReference type="PANTHER" id="PTHR43448">
    <property type="entry name" value="PROTOHEME IX FARNESYLTRANSFERASE, MITOCHONDRIAL"/>
    <property type="match status" value="1"/>
</dbReference>
<dbReference type="Pfam" id="PF01040">
    <property type="entry name" value="UbiA"/>
    <property type="match status" value="1"/>
</dbReference>
<dbReference type="PROSITE" id="PS00943">
    <property type="entry name" value="UBIA"/>
    <property type="match status" value="1"/>
</dbReference>
<comment type="function">
    <text evidence="1">Converts heme B (protoheme IX) to heme O by substitution of the vinyl group on carbon 2 of heme B porphyrin ring with a hydroxyethyl farnesyl side group.</text>
</comment>
<comment type="catalytic activity">
    <reaction evidence="1">
        <text>heme b + (2E,6E)-farnesyl diphosphate + H2O = Fe(II)-heme o + diphosphate</text>
        <dbReference type="Rhea" id="RHEA:28070"/>
        <dbReference type="ChEBI" id="CHEBI:15377"/>
        <dbReference type="ChEBI" id="CHEBI:33019"/>
        <dbReference type="ChEBI" id="CHEBI:60344"/>
        <dbReference type="ChEBI" id="CHEBI:60530"/>
        <dbReference type="ChEBI" id="CHEBI:175763"/>
        <dbReference type="EC" id="2.5.1.141"/>
    </reaction>
</comment>
<comment type="pathway">
    <text evidence="1">Porphyrin-containing compound metabolism; heme O biosynthesis; heme O from protoheme: step 1/1.</text>
</comment>
<comment type="subcellular location">
    <subcellularLocation>
        <location evidence="1">Cell inner membrane</location>
        <topology evidence="1">Multi-pass membrane protein</topology>
    </subcellularLocation>
</comment>
<comment type="miscellaneous">
    <text evidence="1">Carbon 2 of the heme B porphyrin ring is defined according to the Fischer nomenclature.</text>
</comment>
<comment type="similarity">
    <text evidence="1">Belongs to the UbiA prenyltransferase family. Protoheme IX farnesyltransferase subfamily.</text>
</comment>
<sequence>MPLISDLLALCKLKVVALILFTAVVGMFLAVPAPYLPNGLLVLSASIGISMVAASAAVFNHVVDEQIDAQMSRTNQRPLPQGRVSKNQALVWGVFLGFIGLGILQLFVNIITVVLTFISLIGYTIVYTLYLKRATPQNIVIGGAAGATPPVLGWTAVSGTQGIEYACLLFLIVFIWTPPHFWALAIYRVEEYKKIDMPMLPVTHGLAYTRTQILLYTVLLLLVSLLPYLSGMSGLIYLVITIALGVRFLVYAIKIYNNPDDKMVAWSTFMYSINYLMLLFIALLFDHYWLISPWEIL</sequence>
<organism>
    <name type="scientific">Vesicomyosocius okutanii subsp. Calyptogena okutanii (strain HA)</name>
    <dbReference type="NCBI Taxonomy" id="412965"/>
    <lineage>
        <taxon>Bacteria</taxon>
        <taxon>Pseudomonadati</taxon>
        <taxon>Pseudomonadota</taxon>
        <taxon>Gammaproteobacteria</taxon>
        <taxon>Candidatus Pseudothioglobaceae</taxon>
        <taxon>Candidatus Vesicomyosocius</taxon>
    </lineage>
</organism>
<accession>A5CXZ0</accession>
<evidence type="ECO:0000255" key="1">
    <source>
        <dbReference type="HAMAP-Rule" id="MF_00154"/>
    </source>
</evidence>
<keyword id="KW-0997">Cell inner membrane</keyword>
<keyword id="KW-1003">Cell membrane</keyword>
<keyword id="KW-0350">Heme biosynthesis</keyword>
<keyword id="KW-0472">Membrane</keyword>
<keyword id="KW-1185">Reference proteome</keyword>
<keyword id="KW-0808">Transferase</keyword>
<keyword id="KW-0812">Transmembrane</keyword>
<keyword id="KW-1133">Transmembrane helix</keyword>
<feature type="chain" id="PRO_0000326961" description="Protoheme IX farnesyltransferase">
    <location>
        <begin position="1"/>
        <end position="297"/>
    </location>
</feature>
<feature type="transmembrane region" description="Helical" evidence="1">
    <location>
        <begin position="15"/>
        <end position="35"/>
    </location>
</feature>
<feature type="transmembrane region" description="Helical" evidence="1">
    <location>
        <begin position="39"/>
        <end position="59"/>
    </location>
</feature>
<feature type="transmembrane region" description="Helical" evidence="1">
    <location>
        <begin position="91"/>
        <end position="111"/>
    </location>
</feature>
<feature type="transmembrane region" description="Helical" evidence="1">
    <location>
        <begin position="112"/>
        <end position="132"/>
    </location>
</feature>
<feature type="transmembrane region" description="Helical" evidence="1">
    <location>
        <begin position="139"/>
        <end position="159"/>
    </location>
</feature>
<feature type="transmembrane region" description="Helical" evidence="1">
    <location>
        <begin position="166"/>
        <end position="186"/>
    </location>
</feature>
<feature type="transmembrane region" description="Helical" evidence="1">
    <location>
        <begin position="220"/>
        <end position="240"/>
    </location>
</feature>
<feature type="transmembrane region" description="Helical" evidence="1">
    <location>
        <begin position="265"/>
        <end position="285"/>
    </location>
</feature>